<feature type="chain" id="PRO_0000085500" description="Virion infectivity factor">
    <location>
        <begin position="1"/>
        <end position="251"/>
    </location>
</feature>
<protein>
    <recommendedName>
        <fullName>Virion infectivity factor</fullName>
    </recommendedName>
</protein>
<reference key="1">
    <citation type="journal article" date="1989" name="Proc. Natl. Acad. Sci. U.S.A.">
        <title>Nucleotide sequence and genomic organization of feline immunodeficiency virus.</title>
        <authorList>
            <person name="Talbott R.L."/>
            <person name="Sparger E.E."/>
            <person name="Lovelace K.M."/>
            <person name="Fitch W.M."/>
            <person name="Pedersen N.C."/>
            <person name="Luciw P.A."/>
            <person name="Elder J.H."/>
        </authorList>
    </citation>
    <scope>NUCLEOTIDE SEQUENCE [GENOMIC RNA]</scope>
    <source>
        <strain>Clone 34TF10</strain>
    </source>
</reference>
<reference key="2">
    <citation type="journal article" date="1989" name="Proc. Natl. Acad. Sci. U.S.A.">
        <title>Nucleotide sequence analysis of feline immunodeficiency virus: genome organization and relationship to other lentiviruses.</title>
        <authorList>
            <person name="Olmsted R.A."/>
            <person name="Hirsch V.M."/>
            <person name="Purcell R.H."/>
            <person name="Johnson P.R."/>
        </authorList>
    </citation>
    <scope>NUCLEOTIDE SEQUENCE [GENOMIC RNA]</scope>
    <source>
        <strain>Clone FIV-14</strain>
    </source>
</reference>
<organism>
    <name type="scientific">Feline immunodeficiency virus (isolate Petaluma)</name>
    <name type="common">FIV</name>
    <dbReference type="NCBI Taxonomy" id="11674"/>
    <lineage>
        <taxon>Viruses</taxon>
        <taxon>Riboviria</taxon>
        <taxon>Pararnavirae</taxon>
        <taxon>Artverviricota</taxon>
        <taxon>Revtraviricetes</taxon>
        <taxon>Ortervirales</taxon>
        <taxon>Retroviridae</taxon>
        <taxon>Orthoretrovirinae</taxon>
        <taxon>Lentivirus</taxon>
        <taxon>Feline immunodeficiency virus</taxon>
    </lineage>
</organism>
<gene>
    <name type="primary">vif</name>
</gene>
<sequence>MSEEDWQVSRRLFAVLQGGVNSAMLYISRLPPDEREKYKKDFKKRLFDTETGFIKRLRKAEGIKWSFHTRDYYIGYVREMVAGSTTSLSLRMYIYISNPLWHSQYRPGLKNFNKEWPFVNMWIKTGFMWDDIEKQNICIGGEVSPGWGPGMVGIAIKAFSCGERKIEATPVMIIRGEIDPKKWCGDCWNLMCLRNSPPKTLQRLAMLACGVPAKKWRGCCNQRFVSPYRTPADLEVIQSKPSWNLLWSGEL</sequence>
<name>VIF_FIVPE</name>
<organismHost>
    <name type="scientific">Felidae</name>
    <name type="common">cat family</name>
    <dbReference type="NCBI Taxonomy" id="9681"/>
</organismHost>
<evidence type="ECO:0000250" key="1"/>
<evidence type="ECO:0000305" key="2"/>
<proteinExistence type="inferred from homology"/>
<dbReference type="EMBL" id="M25381">
    <property type="protein sequence ID" value="AAB59938.1"/>
    <property type="molecule type" value="Genomic_RNA"/>
</dbReference>
<dbReference type="PIR" id="C33543">
    <property type="entry name" value="ASLJFP"/>
</dbReference>
<dbReference type="RefSeq" id="NP_040974.1">
    <property type="nucleotide sequence ID" value="NC_001482.1"/>
</dbReference>
<dbReference type="SMR" id="P16089"/>
<dbReference type="KEGG" id="vg:1724709"/>
<dbReference type="Proteomes" id="UP000242267">
    <property type="component" value="Segment"/>
</dbReference>
<dbReference type="GO" id="GO:0030430">
    <property type="term" value="C:host cell cytoplasm"/>
    <property type="evidence" value="ECO:0007669"/>
    <property type="project" value="UniProtKB-SubCell"/>
</dbReference>
<dbReference type="GO" id="GO:0044423">
    <property type="term" value="C:virion component"/>
    <property type="evidence" value="ECO:0007669"/>
    <property type="project" value="UniProtKB-KW"/>
</dbReference>
<dbReference type="GO" id="GO:0019058">
    <property type="term" value="P:viral life cycle"/>
    <property type="evidence" value="ECO:0007669"/>
    <property type="project" value="InterPro"/>
</dbReference>
<dbReference type="InterPro" id="IPR008668">
    <property type="entry name" value="Vir_infectivity_fact_Lentivir"/>
</dbReference>
<dbReference type="Pfam" id="PF05851">
    <property type="entry name" value="Lentivirus_VIF"/>
    <property type="match status" value="1"/>
</dbReference>
<comment type="function">
    <text>Determines virus infectivity.</text>
</comment>
<comment type="subcellular location">
    <subcellularLocation>
        <location evidence="1">Host cytoplasm</location>
    </subcellularLocation>
    <subcellularLocation>
        <location evidence="1">Virion</location>
    </subcellularLocation>
</comment>
<comment type="similarity">
    <text evidence="2">Belongs to the feline lentivirus group Vif protein family.</text>
</comment>
<accession>P16089</accession>
<keyword id="KW-1035">Host cytoplasm</keyword>
<keyword id="KW-1185">Reference proteome</keyword>
<keyword id="KW-0946">Virion</keyword>